<protein>
    <recommendedName>
        <fullName evidence="2">tRNA (guanine-N(7)-)-methyltransferase</fullName>
        <ecNumber evidence="2">2.1.1.33</ecNumber>
    </recommendedName>
    <alternativeName>
        <fullName evidence="2">tRNA (guanine(46)-N(7))-methyltransferase</fullName>
    </alternativeName>
    <alternativeName>
        <fullName evidence="2">tRNA(m7G46)-methyltransferase</fullName>
    </alternativeName>
</protein>
<organism>
    <name type="scientific">Trichormus variabilis (strain ATCC 29413 / PCC 7937)</name>
    <name type="common">Anabaena variabilis</name>
    <dbReference type="NCBI Taxonomy" id="240292"/>
    <lineage>
        <taxon>Bacteria</taxon>
        <taxon>Bacillati</taxon>
        <taxon>Cyanobacteriota</taxon>
        <taxon>Cyanophyceae</taxon>
        <taxon>Nostocales</taxon>
        <taxon>Nostocaceae</taxon>
        <taxon>Trichormus</taxon>
    </lineage>
</organism>
<reference key="1">
    <citation type="journal article" date="2014" name="Stand. Genomic Sci.">
        <title>Complete genome sequence of Anabaena variabilis ATCC 29413.</title>
        <authorList>
            <person name="Thiel T."/>
            <person name="Pratte B.S."/>
            <person name="Zhong J."/>
            <person name="Goodwin L."/>
            <person name="Copeland A."/>
            <person name="Lucas S."/>
            <person name="Han C."/>
            <person name="Pitluck S."/>
            <person name="Land M.L."/>
            <person name="Kyrpides N.C."/>
            <person name="Woyke T."/>
        </authorList>
    </citation>
    <scope>NUCLEOTIDE SEQUENCE [LARGE SCALE GENOMIC DNA]</scope>
    <source>
        <strain>ATCC 29413 / PCC 7937</strain>
    </source>
</reference>
<dbReference type="EC" id="2.1.1.33" evidence="2"/>
<dbReference type="EMBL" id="CP000117">
    <property type="protein sequence ID" value="ABA24381.1"/>
    <property type="molecule type" value="Genomic_DNA"/>
</dbReference>
<dbReference type="SMR" id="Q3M3Q5"/>
<dbReference type="STRING" id="240292.Ava_4784"/>
<dbReference type="KEGG" id="ava:Ava_4784"/>
<dbReference type="eggNOG" id="COG0220">
    <property type="taxonomic scope" value="Bacteria"/>
</dbReference>
<dbReference type="HOGENOM" id="CLU_050910_1_3_3"/>
<dbReference type="UniPathway" id="UPA00989"/>
<dbReference type="Proteomes" id="UP000002533">
    <property type="component" value="Chromosome"/>
</dbReference>
<dbReference type="GO" id="GO:0043527">
    <property type="term" value="C:tRNA methyltransferase complex"/>
    <property type="evidence" value="ECO:0007669"/>
    <property type="project" value="TreeGrafter"/>
</dbReference>
<dbReference type="GO" id="GO:0008176">
    <property type="term" value="F:tRNA (guanine(46)-N7)-methyltransferase activity"/>
    <property type="evidence" value="ECO:0007669"/>
    <property type="project" value="UniProtKB-UniRule"/>
</dbReference>
<dbReference type="CDD" id="cd02440">
    <property type="entry name" value="AdoMet_MTases"/>
    <property type="match status" value="1"/>
</dbReference>
<dbReference type="Gene3D" id="3.40.50.150">
    <property type="entry name" value="Vaccinia Virus protein VP39"/>
    <property type="match status" value="1"/>
</dbReference>
<dbReference type="HAMAP" id="MF_01057">
    <property type="entry name" value="tRNA_methyltr_TrmB"/>
    <property type="match status" value="1"/>
</dbReference>
<dbReference type="InterPro" id="IPR029063">
    <property type="entry name" value="SAM-dependent_MTases_sf"/>
</dbReference>
<dbReference type="InterPro" id="IPR003358">
    <property type="entry name" value="tRNA_(Gua-N-7)_MeTrfase_Trmb"/>
</dbReference>
<dbReference type="InterPro" id="IPR055361">
    <property type="entry name" value="tRNA_methyltr_TrmB_bact"/>
</dbReference>
<dbReference type="NCBIfam" id="TIGR00091">
    <property type="entry name" value="tRNA (guanosine(46)-N7)-methyltransferase TrmB"/>
    <property type="match status" value="1"/>
</dbReference>
<dbReference type="PANTHER" id="PTHR23417">
    <property type="entry name" value="3-DEOXY-D-MANNO-OCTULOSONIC-ACID TRANSFERASE/TRNA GUANINE-N 7 - -METHYLTRANSFERASE"/>
    <property type="match status" value="1"/>
</dbReference>
<dbReference type="PANTHER" id="PTHR23417:SF21">
    <property type="entry name" value="TRNA (GUANINE-N(7)-)-METHYLTRANSFERASE"/>
    <property type="match status" value="1"/>
</dbReference>
<dbReference type="Pfam" id="PF02390">
    <property type="entry name" value="Methyltransf_4"/>
    <property type="match status" value="1"/>
</dbReference>
<dbReference type="SUPFAM" id="SSF53335">
    <property type="entry name" value="S-adenosyl-L-methionine-dependent methyltransferases"/>
    <property type="match status" value="1"/>
</dbReference>
<dbReference type="PROSITE" id="PS51625">
    <property type="entry name" value="SAM_MT_TRMB"/>
    <property type="match status" value="1"/>
</dbReference>
<comment type="function">
    <text evidence="2">Catalyzes the formation of N(7)-methylguanine at position 46 (m7G46) in tRNA.</text>
</comment>
<comment type="catalytic activity">
    <reaction evidence="2">
        <text>guanosine(46) in tRNA + S-adenosyl-L-methionine = N(7)-methylguanosine(46) in tRNA + S-adenosyl-L-homocysteine</text>
        <dbReference type="Rhea" id="RHEA:42708"/>
        <dbReference type="Rhea" id="RHEA-COMP:10188"/>
        <dbReference type="Rhea" id="RHEA-COMP:10189"/>
        <dbReference type="ChEBI" id="CHEBI:57856"/>
        <dbReference type="ChEBI" id="CHEBI:59789"/>
        <dbReference type="ChEBI" id="CHEBI:74269"/>
        <dbReference type="ChEBI" id="CHEBI:74480"/>
        <dbReference type="EC" id="2.1.1.33"/>
    </reaction>
</comment>
<comment type="pathway">
    <text evidence="2">tRNA modification; N(7)-methylguanine-tRNA biosynthesis.</text>
</comment>
<comment type="similarity">
    <text evidence="2">Belongs to the class I-like SAM-binding methyltransferase superfamily. TrmB family.</text>
</comment>
<feature type="chain" id="PRO_0000229153" description="tRNA (guanine-N(7)-)-methyltransferase">
    <location>
        <begin position="1"/>
        <end position="215"/>
    </location>
</feature>
<feature type="active site" evidence="1">
    <location>
        <position position="121"/>
    </location>
</feature>
<feature type="binding site" evidence="2">
    <location>
        <position position="43"/>
    </location>
    <ligand>
        <name>S-adenosyl-L-methionine</name>
        <dbReference type="ChEBI" id="CHEBI:59789"/>
    </ligand>
</feature>
<feature type="binding site" evidence="2">
    <location>
        <position position="68"/>
    </location>
    <ligand>
        <name>S-adenosyl-L-methionine</name>
        <dbReference type="ChEBI" id="CHEBI:59789"/>
    </ligand>
</feature>
<feature type="binding site" evidence="2">
    <location>
        <position position="95"/>
    </location>
    <ligand>
        <name>S-adenosyl-L-methionine</name>
        <dbReference type="ChEBI" id="CHEBI:59789"/>
    </ligand>
</feature>
<feature type="binding site" evidence="2">
    <location>
        <position position="121"/>
    </location>
    <ligand>
        <name>S-adenosyl-L-methionine</name>
        <dbReference type="ChEBI" id="CHEBI:59789"/>
    </ligand>
</feature>
<feature type="binding site" evidence="2">
    <location>
        <position position="125"/>
    </location>
    <ligand>
        <name>substrate</name>
    </ligand>
</feature>
<feature type="binding site" evidence="2">
    <location>
        <position position="157"/>
    </location>
    <ligand>
        <name>substrate</name>
    </ligand>
</feature>
<keyword id="KW-0489">Methyltransferase</keyword>
<keyword id="KW-0949">S-adenosyl-L-methionine</keyword>
<keyword id="KW-0808">Transferase</keyword>
<keyword id="KW-0819">tRNA processing</keyword>
<gene>
    <name evidence="2" type="primary">trmB</name>
    <name type="ordered locus">Ava_4784</name>
</gene>
<evidence type="ECO:0000250" key="1"/>
<evidence type="ECO:0000255" key="2">
    <source>
        <dbReference type="HAMAP-Rule" id="MF_01057"/>
    </source>
</evidence>
<name>TRMB_TRIV2</name>
<proteinExistence type="inferred from homology"/>
<accession>Q3M3Q5</accession>
<sequence length="215" mass="24541">MSALPFVRVRQHVNPLAQKYLTPANPLEWEKVYSSPHQPLHLDIGCARGRFVLQMAQVEPRWNFLGLEIREPLVIEANQFRSQLGLSNLHYLYCNANNSLQPLLSSLPTGILQRVTIQFPDPWFKTRHAKRRVVQPELVQDIANYLAVGGVVFLQSDMEFVAVEMCDRFAANPAFKKVGSGEWLSENPLPVATERETTTQNRGEPVYRALFERIS</sequence>